<name>GLTR2_MYCTA</name>
<evidence type="ECO:0000250" key="1"/>
<evidence type="ECO:0000256" key="2">
    <source>
        <dbReference type="SAM" id="MobiDB-lite"/>
    </source>
</evidence>
<evidence type="ECO:0000305" key="3"/>
<sequence>MEETSVAGDPGPDAGTSTAPNAAPEPVARRQRILFVGEAATLAHVVRPFVLARSLDPSRYEVHFACDPRFNKLLGPLPFPHHPIHTVPSEEVLLKIAQGRLFYNTRTLRKYIAADRKILNEIAPDVVVGDNRLSLSVSARLAGIPYIAIANAYWSPQARRRFPLPDVPWTRFFGVRPVSILYRLYRPLIFALYCLPLNWLRRKHGLSSLGWDLCRIFTDGDYTLYADVPELVPTYNLPANHRYLGPVLWSPDVKPPTWWHSLPTDRPIIYATLGSSGGKNLLQVVLNALADLPVTVIAATAGRNHLKNVPANAFVADYLPGEAAAARSAVVLCNGGSPTTQQALAAGVPVIGLPSNMDQHLNMEALERAGAGVLLRTERLNTEGVAAAVKQVLSGAEFRQAARRLAEAFGPDFAGFPQHIESALRLVC</sequence>
<comment type="function">
    <text evidence="1">Involved in glycosylation steps downstream of mono-O-methyl-glycosyl-p-hydroxybenzoic acid derivative (p-HBAD I) and 2-O-methyl-rhamnosyl-phenolphthiocerol dimycocerosate (mycoside B) during the p-hydroxybenzoic acid derivatives (p-HBAD) and glycosylated phenolphthiocerol dimycocerosates (PGL) biosynthesis.</text>
</comment>
<comment type="similarity">
    <text evidence="3">Belongs to the UDP-glycosyltransferase family.</text>
</comment>
<organism>
    <name type="scientific">Mycobacterium tuberculosis (strain ATCC 25177 / H37Ra)</name>
    <dbReference type="NCBI Taxonomy" id="419947"/>
    <lineage>
        <taxon>Bacteria</taxon>
        <taxon>Bacillati</taxon>
        <taxon>Actinomycetota</taxon>
        <taxon>Actinomycetes</taxon>
        <taxon>Mycobacteriales</taxon>
        <taxon>Mycobacteriaceae</taxon>
        <taxon>Mycobacterium</taxon>
        <taxon>Mycobacterium tuberculosis complex</taxon>
    </lineage>
</organism>
<keyword id="KW-0328">Glycosyltransferase</keyword>
<keyword id="KW-1185">Reference proteome</keyword>
<keyword id="KW-0808">Transferase</keyword>
<protein>
    <recommendedName>
        <fullName>PGL/p-HBAD biosynthesis glycosyltransferase MRA_2985</fullName>
        <ecNumber>2.4.1.-</ecNumber>
    </recommendedName>
</protein>
<proteinExistence type="inferred from homology"/>
<gene>
    <name type="ordered locus">MRA_2985</name>
</gene>
<feature type="chain" id="PRO_0000314437" description="PGL/p-HBAD biosynthesis glycosyltransferase MRA_2985">
    <location>
        <begin position="1"/>
        <end position="428"/>
    </location>
</feature>
<feature type="region of interest" description="Disordered" evidence="2">
    <location>
        <begin position="1"/>
        <end position="23"/>
    </location>
</feature>
<reference key="1">
    <citation type="journal article" date="2008" name="PLoS ONE">
        <title>Genetic basis of virulence attenuation revealed by comparative genomic analysis of Mycobacterium tuberculosis strain H37Ra versus H37Rv.</title>
        <authorList>
            <person name="Zheng H."/>
            <person name="Lu L."/>
            <person name="Wang B."/>
            <person name="Pu S."/>
            <person name="Zhang X."/>
            <person name="Zhu G."/>
            <person name="Shi W."/>
            <person name="Zhang L."/>
            <person name="Wang H."/>
            <person name="Wang S."/>
            <person name="Zhao G."/>
            <person name="Zhang Y."/>
        </authorList>
    </citation>
    <scope>NUCLEOTIDE SEQUENCE [LARGE SCALE GENOMIC DNA]</scope>
    <source>
        <strain>ATCC 25177 / H37Ra</strain>
    </source>
</reference>
<accession>A5U6W6</accession>
<dbReference type="EC" id="2.4.1.-"/>
<dbReference type="EMBL" id="CP000611">
    <property type="protein sequence ID" value="ABQ74766.1"/>
    <property type="molecule type" value="Genomic_DNA"/>
</dbReference>
<dbReference type="RefSeq" id="WP_003899557.1">
    <property type="nucleotide sequence ID" value="NZ_CP016972.1"/>
</dbReference>
<dbReference type="SMR" id="A5U6W6"/>
<dbReference type="CAZy" id="GT1">
    <property type="family name" value="Glycosyltransferase Family 1"/>
</dbReference>
<dbReference type="KEGG" id="mra:MRA_2985"/>
<dbReference type="eggNOG" id="COG1819">
    <property type="taxonomic scope" value="Bacteria"/>
</dbReference>
<dbReference type="HOGENOM" id="CLU_692271_0_0_11"/>
<dbReference type="Proteomes" id="UP000001988">
    <property type="component" value="Chromosome"/>
</dbReference>
<dbReference type="GO" id="GO:0016758">
    <property type="term" value="F:hexosyltransferase activity"/>
    <property type="evidence" value="ECO:0007669"/>
    <property type="project" value="UniProtKB-ARBA"/>
</dbReference>
<dbReference type="GO" id="GO:0008194">
    <property type="term" value="F:UDP-glycosyltransferase activity"/>
    <property type="evidence" value="ECO:0007669"/>
    <property type="project" value="InterPro"/>
</dbReference>
<dbReference type="GO" id="GO:0009058">
    <property type="term" value="P:biosynthetic process"/>
    <property type="evidence" value="ECO:0007669"/>
    <property type="project" value="UniProtKB-ARBA"/>
</dbReference>
<dbReference type="CDD" id="cd03784">
    <property type="entry name" value="GT1_Gtf-like"/>
    <property type="match status" value="1"/>
</dbReference>
<dbReference type="FunFam" id="3.40.50.2000:FF:000072">
    <property type="entry name" value="Glycosyl transferase"/>
    <property type="match status" value="1"/>
</dbReference>
<dbReference type="Gene3D" id="3.40.50.2000">
    <property type="entry name" value="Glycogen Phosphorylase B"/>
    <property type="match status" value="2"/>
</dbReference>
<dbReference type="InterPro" id="IPR010610">
    <property type="entry name" value="EryCIII-like_C"/>
</dbReference>
<dbReference type="InterPro" id="IPR002213">
    <property type="entry name" value="UDP_glucos_trans"/>
</dbReference>
<dbReference type="PANTHER" id="PTHR21015:SF22">
    <property type="entry name" value="GLYCOSYLTRANSFERASE"/>
    <property type="match status" value="1"/>
</dbReference>
<dbReference type="PANTHER" id="PTHR21015">
    <property type="entry name" value="UDP-N-ACETYLGLUCOSAMINE--N-ACETYLMURAMYL-(PENTAPEPTIDE) PYROPHOSPHORYL-UNDECAPRENOL N-ACETYLGLUCOSAMINE TRANSFERASE 1"/>
    <property type="match status" value="1"/>
</dbReference>
<dbReference type="Pfam" id="PF06722">
    <property type="entry name" value="EryCIII-like_C"/>
    <property type="match status" value="1"/>
</dbReference>
<dbReference type="SUPFAM" id="SSF53756">
    <property type="entry name" value="UDP-Glycosyltransferase/glycogen phosphorylase"/>
    <property type="match status" value="1"/>
</dbReference>